<comment type="function">
    <text evidence="1">The branched-chain alpha-keto dehydrogenase complex catalyzes the overall conversion of alpha-keto acids to acyl-CoA and CO(2). It contains multiple copies of three enzymatic components: branched-chain alpha-keto acid decarboxylase (E1), lipoamide acyltransferase (E2) and lipoamide dehydrogenase (E3) (By similarity).</text>
</comment>
<comment type="catalytic activity">
    <reaction>
        <text>N(6)-[(R)-lipoyl]-L-lysyl-[protein] + 3-methyl-2-oxobutanoate + H(+) = N(6)-[(R)-S(8)-2-methylpropanoyldihydrolipoyl]-L-lysyl-[protein] + CO2</text>
        <dbReference type="Rhea" id="RHEA:13457"/>
        <dbReference type="Rhea" id="RHEA-COMP:10474"/>
        <dbReference type="Rhea" id="RHEA-COMP:10497"/>
        <dbReference type="ChEBI" id="CHEBI:11851"/>
        <dbReference type="ChEBI" id="CHEBI:15378"/>
        <dbReference type="ChEBI" id="CHEBI:16526"/>
        <dbReference type="ChEBI" id="CHEBI:83099"/>
        <dbReference type="ChEBI" id="CHEBI:83142"/>
        <dbReference type="EC" id="1.2.4.4"/>
    </reaction>
</comment>
<comment type="cofactor">
    <cofactor evidence="1">
        <name>thiamine diphosphate</name>
        <dbReference type="ChEBI" id="CHEBI:58937"/>
    </cofactor>
</comment>
<comment type="subunit">
    <text evidence="1">Heterotetramer of alpha and beta chains.</text>
</comment>
<comment type="subcellular location">
    <subcellularLocation>
        <location evidence="3 4">Mitochondrion matrix</location>
    </subcellularLocation>
</comment>
<comment type="alternative products">
    <event type="alternative splicing"/>
    <isoform>
        <id>Q84JL2-1</id>
        <name>1</name>
        <sequence type="displayed"/>
    </isoform>
    <text>A number of isoforms are produced. According to EST sequences.</text>
</comment>
<comment type="miscellaneous">
    <text evidence="1">Bound potassium ions stabilize the protein structure.</text>
</comment>
<comment type="similarity">
    <text evidence="5">Belongs to the BCKDHA family.</text>
</comment>
<comment type="sequence caution" evidence="5">
    <conflict type="erroneous initiation">
        <sequence resource="EMBL-CDS" id="CAC05456"/>
    </conflict>
    <text>Truncated N-terminus.</text>
</comment>
<gene>
    <name type="ordered locus">At5g09300</name>
    <name type="ORF">T5E8_100</name>
</gene>
<proteinExistence type="evidence at protein level"/>
<protein>
    <recommendedName>
        <fullName>2-oxoisovalerate dehydrogenase subunit alpha 2, mitochondrial</fullName>
        <ecNumber>1.2.4.4</ecNumber>
    </recommendedName>
    <alternativeName>
        <fullName>Branched-chain alpha-keto acid dehydrogenase E1 component alpha chain</fullName>
        <shortName>BCKDE1A</shortName>
        <shortName>BCKDH E1-alpha</shortName>
    </alternativeName>
</protein>
<accession>Q84JL2</accession>
<accession>Q9FY85</accession>
<evidence type="ECO:0000250" key="1"/>
<evidence type="ECO:0000255" key="2"/>
<evidence type="ECO:0000269" key="3">
    <source>
    </source>
</evidence>
<evidence type="ECO:0000269" key="4">
    <source>
    </source>
</evidence>
<evidence type="ECO:0000305" key="5"/>
<organism>
    <name type="scientific">Arabidopsis thaliana</name>
    <name type="common">Mouse-ear cress</name>
    <dbReference type="NCBI Taxonomy" id="3702"/>
    <lineage>
        <taxon>Eukaryota</taxon>
        <taxon>Viridiplantae</taxon>
        <taxon>Streptophyta</taxon>
        <taxon>Embryophyta</taxon>
        <taxon>Tracheophyta</taxon>
        <taxon>Spermatophyta</taxon>
        <taxon>Magnoliopsida</taxon>
        <taxon>eudicotyledons</taxon>
        <taxon>Gunneridae</taxon>
        <taxon>Pentapetalae</taxon>
        <taxon>rosids</taxon>
        <taxon>malvids</taxon>
        <taxon>Brassicales</taxon>
        <taxon>Brassicaceae</taxon>
        <taxon>Camelineae</taxon>
        <taxon>Arabidopsis</taxon>
    </lineage>
</organism>
<reference key="1">
    <citation type="journal article" date="2000" name="Nature">
        <title>Sequence and analysis of chromosome 5 of the plant Arabidopsis thaliana.</title>
        <authorList>
            <person name="Tabata S."/>
            <person name="Kaneko T."/>
            <person name="Nakamura Y."/>
            <person name="Kotani H."/>
            <person name="Kato T."/>
            <person name="Asamizu E."/>
            <person name="Miyajima N."/>
            <person name="Sasamoto S."/>
            <person name="Kimura T."/>
            <person name="Hosouchi T."/>
            <person name="Kawashima K."/>
            <person name="Kohara M."/>
            <person name="Matsumoto M."/>
            <person name="Matsuno A."/>
            <person name="Muraki A."/>
            <person name="Nakayama S."/>
            <person name="Nakazaki N."/>
            <person name="Naruo K."/>
            <person name="Okumura S."/>
            <person name="Shinpo S."/>
            <person name="Takeuchi C."/>
            <person name="Wada T."/>
            <person name="Watanabe A."/>
            <person name="Yamada M."/>
            <person name="Yasuda M."/>
            <person name="Sato S."/>
            <person name="de la Bastide M."/>
            <person name="Huang E."/>
            <person name="Spiegel L."/>
            <person name="Gnoj L."/>
            <person name="O'Shaughnessy A."/>
            <person name="Preston R."/>
            <person name="Habermann K."/>
            <person name="Murray J."/>
            <person name="Johnson D."/>
            <person name="Rohlfing T."/>
            <person name="Nelson J."/>
            <person name="Stoneking T."/>
            <person name="Pepin K."/>
            <person name="Spieth J."/>
            <person name="Sekhon M."/>
            <person name="Armstrong J."/>
            <person name="Becker M."/>
            <person name="Belter E."/>
            <person name="Cordum H."/>
            <person name="Cordes M."/>
            <person name="Courtney L."/>
            <person name="Courtney W."/>
            <person name="Dante M."/>
            <person name="Du H."/>
            <person name="Edwards J."/>
            <person name="Fryman J."/>
            <person name="Haakensen B."/>
            <person name="Lamar E."/>
            <person name="Latreille P."/>
            <person name="Leonard S."/>
            <person name="Meyer R."/>
            <person name="Mulvaney E."/>
            <person name="Ozersky P."/>
            <person name="Riley A."/>
            <person name="Strowmatt C."/>
            <person name="Wagner-McPherson C."/>
            <person name="Wollam A."/>
            <person name="Yoakum M."/>
            <person name="Bell M."/>
            <person name="Dedhia N."/>
            <person name="Parnell L."/>
            <person name="Shah R."/>
            <person name="Rodriguez M."/>
            <person name="Hoon See L."/>
            <person name="Vil D."/>
            <person name="Baker J."/>
            <person name="Kirchoff K."/>
            <person name="Toth K."/>
            <person name="King L."/>
            <person name="Bahret A."/>
            <person name="Miller B."/>
            <person name="Marra M.A."/>
            <person name="Martienssen R."/>
            <person name="McCombie W.R."/>
            <person name="Wilson R.K."/>
            <person name="Murphy G."/>
            <person name="Bancroft I."/>
            <person name="Volckaert G."/>
            <person name="Wambutt R."/>
            <person name="Duesterhoeft A."/>
            <person name="Stiekema W."/>
            <person name="Pohl T."/>
            <person name="Entian K.-D."/>
            <person name="Terryn N."/>
            <person name="Hartley N."/>
            <person name="Bent E."/>
            <person name="Johnson S."/>
            <person name="Langham S.-A."/>
            <person name="McCullagh B."/>
            <person name="Robben J."/>
            <person name="Grymonprez B."/>
            <person name="Zimmermann W."/>
            <person name="Ramsperger U."/>
            <person name="Wedler H."/>
            <person name="Balke K."/>
            <person name="Wedler E."/>
            <person name="Peters S."/>
            <person name="van Staveren M."/>
            <person name="Dirkse W."/>
            <person name="Mooijman P."/>
            <person name="Klein Lankhorst R."/>
            <person name="Weitzenegger T."/>
            <person name="Bothe G."/>
            <person name="Rose M."/>
            <person name="Hauf J."/>
            <person name="Berneiser S."/>
            <person name="Hempel S."/>
            <person name="Feldpausch M."/>
            <person name="Lamberth S."/>
            <person name="Villarroel R."/>
            <person name="Gielen J."/>
            <person name="Ardiles W."/>
            <person name="Bents O."/>
            <person name="Lemcke K."/>
            <person name="Kolesov G."/>
            <person name="Mayer K.F.X."/>
            <person name="Rudd S."/>
            <person name="Schoof H."/>
            <person name="Schueller C."/>
            <person name="Zaccaria P."/>
            <person name="Mewes H.-W."/>
            <person name="Bevan M."/>
            <person name="Fransz P.F."/>
        </authorList>
    </citation>
    <scope>NUCLEOTIDE SEQUENCE [LARGE SCALE GENOMIC DNA]</scope>
    <source>
        <strain>cv. Columbia</strain>
    </source>
</reference>
<reference key="2">
    <citation type="journal article" date="2017" name="Plant J.">
        <title>Araport11: a complete reannotation of the Arabidopsis thaliana reference genome.</title>
        <authorList>
            <person name="Cheng C.Y."/>
            <person name="Krishnakumar V."/>
            <person name="Chan A.P."/>
            <person name="Thibaud-Nissen F."/>
            <person name="Schobel S."/>
            <person name="Town C.D."/>
        </authorList>
    </citation>
    <scope>GENOME REANNOTATION</scope>
    <source>
        <strain>cv. Columbia</strain>
    </source>
</reference>
<reference key="3">
    <citation type="journal article" date="2003" name="Science">
        <title>Empirical analysis of transcriptional activity in the Arabidopsis genome.</title>
        <authorList>
            <person name="Yamada K."/>
            <person name="Lim J."/>
            <person name="Dale J.M."/>
            <person name="Chen H."/>
            <person name="Shinn P."/>
            <person name="Palm C.J."/>
            <person name="Southwick A.M."/>
            <person name="Wu H.C."/>
            <person name="Kim C.J."/>
            <person name="Nguyen M."/>
            <person name="Pham P.K."/>
            <person name="Cheuk R.F."/>
            <person name="Karlin-Newmann G."/>
            <person name="Liu S.X."/>
            <person name="Lam B."/>
            <person name="Sakano H."/>
            <person name="Wu T."/>
            <person name="Yu G."/>
            <person name="Miranda M."/>
            <person name="Quach H.L."/>
            <person name="Tripp M."/>
            <person name="Chang C.H."/>
            <person name="Lee J.M."/>
            <person name="Toriumi M.J."/>
            <person name="Chan M.M."/>
            <person name="Tang C.C."/>
            <person name="Onodera C.S."/>
            <person name="Deng J.M."/>
            <person name="Akiyama K."/>
            <person name="Ansari Y."/>
            <person name="Arakawa T."/>
            <person name="Banh J."/>
            <person name="Banno F."/>
            <person name="Bowser L."/>
            <person name="Brooks S.Y."/>
            <person name="Carninci P."/>
            <person name="Chao Q."/>
            <person name="Choy N."/>
            <person name="Enju A."/>
            <person name="Goldsmith A.D."/>
            <person name="Gurjal M."/>
            <person name="Hansen N.F."/>
            <person name="Hayashizaki Y."/>
            <person name="Johnson-Hopson C."/>
            <person name="Hsuan V.W."/>
            <person name="Iida K."/>
            <person name="Karnes M."/>
            <person name="Khan S."/>
            <person name="Koesema E."/>
            <person name="Ishida J."/>
            <person name="Jiang P.X."/>
            <person name="Jones T."/>
            <person name="Kawai J."/>
            <person name="Kamiya A."/>
            <person name="Meyers C."/>
            <person name="Nakajima M."/>
            <person name="Narusaka M."/>
            <person name="Seki M."/>
            <person name="Sakurai T."/>
            <person name="Satou M."/>
            <person name="Tamse R."/>
            <person name="Vaysberg M."/>
            <person name="Wallender E.K."/>
            <person name="Wong C."/>
            <person name="Yamamura Y."/>
            <person name="Yuan S."/>
            <person name="Shinozaki K."/>
            <person name="Davis R.W."/>
            <person name="Theologis A."/>
            <person name="Ecker J.R."/>
        </authorList>
    </citation>
    <scope>NUCLEOTIDE SEQUENCE [LARGE SCALE MRNA]</scope>
    <source>
        <strain>cv. Columbia</strain>
    </source>
</reference>
<reference key="4">
    <citation type="journal article" date="2004" name="Plant Cell">
        <title>Experimental analysis of the Arabidopsis mitochondrial proteome highlights signaling and regulatory components, provides assessment of targeting prediction programs, and indicates plant-specific mitochondrial proteins.</title>
        <authorList>
            <person name="Heazlewood J.L."/>
            <person name="Tonti-Filippini J.S."/>
            <person name="Gout A.M."/>
            <person name="Day D.A."/>
            <person name="Whelan J."/>
            <person name="Millar A.H."/>
        </authorList>
    </citation>
    <scope>IDENTIFICATION BY MASS SPECTROMETRY</scope>
    <scope>SUBCELLULAR LOCATION [LARGE SCALE ANALYSIS]</scope>
    <source>
        <strain>cv. Landsberg erecta</strain>
    </source>
</reference>
<reference key="5">
    <citation type="journal article" date="2004" name="Plant Physiol.">
        <title>Lipoic acid-dependent oxidative catabolism of alpha-keto acids in mitochondria provides evidence for branched-chain amino acid catabolism in Arabidopsis.</title>
        <authorList>
            <person name="Taylor N.L."/>
            <person name="Heazlewood J.L."/>
            <person name="Day D.A."/>
            <person name="Millar A.H."/>
        </authorList>
    </citation>
    <scope>IDENTIFICATION BY MASS SPECTROMETRY</scope>
    <scope>SUBCELLULAR LOCATION</scope>
</reference>
<name>ODBA2_ARATH</name>
<dbReference type="EC" id="1.2.4.4"/>
<dbReference type="EMBL" id="AL391712">
    <property type="protein sequence ID" value="CAC05456.1"/>
    <property type="status" value="ALT_INIT"/>
    <property type="molecule type" value="Genomic_DNA"/>
</dbReference>
<dbReference type="EMBL" id="CP002688">
    <property type="protein sequence ID" value="AED91371.1"/>
    <property type="molecule type" value="Genomic_DNA"/>
</dbReference>
<dbReference type="EMBL" id="BT004286">
    <property type="protein sequence ID" value="AAO42286.1"/>
    <property type="molecule type" value="mRNA"/>
</dbReference>
<dbReference type="EMBL" id="BT005616">
    <property type="protein sequence ID" value="AAO64036.1"/>
    <property type="molecule type" value="mRNA"/>
</dbReference>
<dbReference type="RefSeq" id="NP_568209.1">
    <molecule id="Q84JL2-1"/>
    <property type="nucleotide sequence ID" value="NM_120966.4"/>
</dbReference>
<dbReference type="SMR" id="Q84JL2"/>
<dbReference type="FunCoup" id="Q84JL2">
    <property type="interactions" value="2289"/>
</dbReference>
<dbReference type="STRING" id="3702.Q84JL2"/>
<dbReference type="PaxDb" id="3702-AT5G09300.1"/>
<dbReference type="ProteomicsDB" id="238996">
    <molecule id="Q84JL2-1"/>
</dbReference>
<dbReference type="EnsemblPlants" id="AT5G09300.1">
    <molecule id="Q84JL2-1"/>
    <property type="protein sequence ID" value="AT5G09300.1"/>
    <property type="gene ID" value="AT5G09300"/>
</dbReference>
<dbReference type="GeneID" id="830789"/>
<dbReference type="Gramene" id="AT5G09300.1">
    <molecule id="Q84JL2-1"/>
    <property type="protein sequence ID" value="AT5G09300.1"/>
    <property type="gene ID" value="AT5G09300"/>
</dbReference>
<dbReference type="KEGG" id="ath:AT5G09300"/>
<dbReference type="Araport" id="AT5G09300"/>
<dbReference type="TAIR" id="AT5G09300"/>
<dbReference type="eggNOG" id="KOG1182">
    <property type="taxonomic scope" value="Eukaryota"/>
</dbReference>
<dbReference type="HOGENOM" id="CLU_029393_1_2_1"/>
<dbReference type="InParanoid" id="Q84JL2"/>
<dbReference type="PhylomeDB" id="Q84JL2"/>
<dbReference type="BioCyc" id="ARA:AT5G09300-MONOMER"/>
<dbReference type="BioCyc" id="MetaCyc:AT5G09300-MONOMER"/>
<dbReference type="PRO" id="PR:Q84JL2"/>
<dbReference type="Proteomes" id="UP000006548">
    <property type="component" value="Chromosome 5"/>
</dbReference>
<dbReference type="ExpressionAtlas" id="Q84JL2">
    <property type="expression patterns" value="baseline and differential"/>
</dbReference>
<dbReference type="GO" id="GO:0005759">
    <property type="term" value="C:mitochondrial matrix"/>
    <property type="evidence" value="ECO:0007669"/>
    <property type="project" value="UniProtKB-SubCell"/>
</dbReference>
<dbReference type="GO" id="GO:0005739">
    <property type="term" value="C:mitochondrion"/>
    <property type="evidence" value="ECO:0000314"/>
    <property type="project" value="TAIR"/>
</dbReference>
<dbReference type="GO" id="GO:0003863">
    <property type="term" value="F:3-methyl-2-oxobutanoate dehydrogenase (2-methylpropanoyl-transferring) activity"/>
    <property type="evidence" value="ECO:0007669"/>
    <property type="project" value="UniProtKB-EC"/>
</dbReference>
<dbReference type="GO" id="GO:0046872">
    <property type="term" value="F:metal ion binding"/>
    <property type="evidence" value="ECO:0007669"/>
    <property type="project" value="UniProtKB-KW"/>
</dbReference>
<dbReference type="GO" id="GO:0009083">
    <property type="term" value="P:branched-chain amino acid catabolic process"/>
    <property type="evidence" value="ECO:0000316"/>
    <property type="project" value="TAIR"/>
</dbReference>
<dbReference type="CDD" id="cd02000">
    <property type="entry name" value="TPP_E1_PDC_ADC_BCADC"/>
    <property type="match status" value="1"/>
</dbReference>
<dbReference type="FunFam" id="3.40.50.970:FF:000015">
    <property type="entry name" value="2-oxoisovalerate dehydrogenase subunit alpha"/>
    <property type="match status" value="1"/>
</dbReference>
<dbReference type="Gene3D" id="3.40.50.970">
    <property type="match status" value="1"/>
</dbReference>
<dbReference type="InterPro" id="IPR050771">
    <property type="entry name" value="Alpha-ketoacid_DH_E1_comp"/>
</dbReference>
<dbReference type="InterPro" id="IPR001017">
    <property type="entry name" value="DH_E1"/>
</dbReference>
<dbReference type="InterPro" id="IPR029061">
    <property type="entry name" value="THDP-binding"/>
</dbReference>
<dbReference type="PANTHER" id="PTHR43380:SF11">
    <property type="entry name" value="2-OXOISOVALERATE DEHYDROGENASE SUBUNIT ALPHA 2, MITOCHONDRIAL"/>
    <property type="match status" value="1"/>
</dbReference>
<dbReference type="PANTHER" id="PTHR43380">
    <property type="entry name" value="2-OXOISOVALERATE DEHYDROGENASE SUBUNIT ALPHA, MITOCHONDRIAL"/>
    <property type="match status" value="1"/>
</dbReference>
<dbReference type="Pfam" id="PF00676">
    <property type="entry name" value="E1_dh"/>
    <property type="match status" value="1"/>
</dbReference>
<dbReference type="SUPFAM" id="SSF52518">
    <property type="entry name" value="Thiamin diphosphate-binding fold (THDP-binding)"/>
    <property type="match status" value="1"/>
</dbReference>
<sequence length="472" mass="53214">MALHLRSSFSSKSTLLNILRHNLGFGSRSHVTRHIRQILPHDPPLRGSQNPISRLCNTMAEPETLSSFVQHEYANNHQVMDFPGGKVAFTPEIQFISESDKERVPCYRVLDDNGQLITNSQFVQVSEEVAVKIYSDMVTLQIMDNIFYEAQRQGRLSFYATAIGEEAINIASAAALTPQDVIFPQYREPGVLLWRGFTLQEFANQCFGNKSDYGKGRQMPVHYGSNKLNYFTVSATIATQLPNAVGAAYSLKMDKKDACAVTYFGDGGTSEGDFHAALNIAAVMEAPVLFICRNNGWAISTPTSDQFRSDGVVVKGRAYGIRSIRVDGNDALAMYSAVHTAREMAIREQRPILIEALTYRVGHHSTSDDSTRYRSAGEIEWWNKARNPLSRFRTWIESNGWWSDKTESDLRSRIKKEMLEALRVAEKTEKPNLQNMFSDVYDVPPSNLREQELLVRQTINSHPQDYPSDVPL</sequence>
<keyword id="KW-0025">Alternative splicing</keyword>
<keyword id="KW-0479">Metal-binding</keyword>
<keyword id="KW-0496">Mitochondrion</keyword>
<keyword id="KW-0560">Oxidoreductase</keyword>
<keyword id="KW-0630">Potassium</keyword>
<keyword id="KW-1185">Reference proteome</keyword>
<keyword id="KW-0786">Thiamine pyrophosphate</keyword>
<keyword id="KW-0809">Transit peptide</keyword>
<feature type="transit peptide" description="Mitochondrion" evidence="2">
    <location>
        <begin position="1"/>
        <end status="unknown"/>
    </location>
</feature>
<feature type="chain" id="PRO_0000422383" description="2-oxoisovalerate dehydrogenase subunit alpha 2, mitochondrial">
    <location>
        <begin status="unknown"/>
        <end position="472"/>
    </location>
</feature>
<feature type="binding site" evidence="1">
    <location>
        <begin position="185"/>
        <end position="187"/>
    </location>
    <ligand>
        <name>thiamine diphosphate</name>
        <dbReference type="ChEBI" id="CHEBI:58937"/>
    </ligand>
</feature>
<feature type="binding site" evidence="1">
    <location>
        <position position="234"/>
    </location>
    <ligand>
        <name>K(+)</name>
        <dbReference type="ChEBI" id="CHEBI:29103"/>
    </ligand>
</feature>
<feature type="binding site" evidence="1">
    <location>
        <position position="239"/>
    </location>
    <ligand>
        <name>K(+)</name>
        <dbReference type="ChEBI" id="CHEBI:29103"/>
    </ligand>
</feature>
<feature type="binding site" evidence="1">
    <location>
        <position position="240"/>
    </location>
    <ligand>
        <name>K(+)</name>
        <dbReference type="ChEBI" id="CHEBI:29103"/>
    </ligand>
</feature>